<reference key="1">
    <citation type="journal article" date="1992" name="Mol. Biol. Evol.">
        <title>Sequences of primate insulin genes support the hypothesis of a slower rate of molecular evolution in humans and apes than in monkeys.</title>
        <authorList>
            <person name="Seino S."/>
            <person name="Bell G.I."/>
            <person name="Li W."/>
        </authorList>
    </citation>
    <scope>NUCLEOTIDE SEQUENCE [GENOMIC DNA]</scope>
</reference>
<reference key="2">
    <citation type="journal article" date="2003" name="Genome Res.">
        <title>Global haplotype diversity in the human insulin gene region.</title>
        <authorList>
            <person name="Stead J.D.H."/>
            <person name="Hurles M.E."/>
            <person name="Jeffreys A.J."/>
        </authorList>
    </citation>
    <scope>NUCLEOTIDE SEQUENCE [GENOMIC DNA]</scope>
</reference>
<gene>
    <name type="primary">INS</name>
</gene>
<evidence type="ECO:0000250" key="1"/>
<evidence type="ECO:0000305" key="2"/>
<evidence type="ECO:0007829" key="3">
    <source>
        <dbReference type="PDB" id="1BZV"/>
    </source>
</evidence>
<accession>P30410</accession>
<comment type="function">
    <text>Insulin decreases blood glucose concentration. It increases cell permeability to monosaccharides, amino acids and fatty acids. It accelerates glycolysis, the pentose phosphate cycle, and glycogen synthesis in liver.</text>
</comment>
<comment type="subunit">
    <text>Heterodimer of a B chain and an A chain linked by two disulfide bonds.</text>
</comment>
<comment type="subcellular location">
    <subcellularLocation>
        <location>Secreted</location>
    </subcellularLocation>
</comment>
<comment type="similarity">
    <text evidence="2">Belongs to the insulin family.</text>
</comment>
<proteinExistence type="evidence at protein level"/>
<feature type="signal peptide" evidence="1">
    <location>
        <begin position="1"/>
        <end position="24"/>
    </location>
</feature>
<feature type="peptide" id="PRO_0000015870" description="Insulin B chain">
    <location>
        <begin position="25"/>
        <end position="54"/>
    </location>
</feature>
<feature type="propeptide" id="PRO_0000015871" description="C peptide">
    <location>
        <begin position="57"/>
        <end position="87"/>
    </location>
</feature>
<feature type="peptide" id="PRO_0000015872" description="Insulin A chain">
    <location>
        <begin position="90"/>
        <end position="110"/>
    </location>
</feature>
<feature type="disulfide bond" description="Interchain (between B and A chains)" evidence="1">
    <location>
        <begin position="31"/>
        <end position="96"/>
    </location>
</feature>
<feature type="disulfide bond" description="Interchain (between B and A chains)" evidence="1">
    <location>
        <begin position="43"/>
        <end position="109"/>
    </location>
</feature>
<feature type="disulfide bond" evidence="1">
    <location>
        <begin position="95"/>
        <end position="100"/>
    </location>
</feature>
<feature type="helix" evidence="3">
    <location>
        <begin position="33"/>
        <end position="43"/>
    </location>
</feature>
<feature type="strand" evidence="3">
    <location>
        <begin position="44"/>
        <end position="46"/>
    </location>
</feature>
<name>INS_PANTR</name>
<organism>
    <name type="scientific">Pan troglodytes</name>
    <name type="common">Chimpanzee</name>
    <dbReference type="NCBI Taxonomy" id="9598"/>
    <lineage>
        <taxon>Eukaryota</taxon>
        <taxon>Metazoa</taxon>
        <taxon>Chordata</taxon>
        <taxon>Craniata</taxon>
        <taxon>Vertebrata</taxon>
        <taxon>Euteleostomi</taxon>
        <taxon>Mammalia</taxon>
        <taxon>Eutheria</taxon>
        <taxon>Euarchontoglires</taxon>
        <taxon>Primates</taxon>
        <taxon>Haplorrhini</taxon>
        <taxon>Catarrhini</taxon>
        <taxon>Hominidae</taxon>
        <taxon>Pan</taxon>
    </lineage>
</organism>
<keyword id="KW-0002">3D-structure</keyword>
<keyword id="KW-0119">Carbohydrate metabolism</keyword>
<keyword id="KW-0165">Cleavage on pair of basic residues</keyword>
<keyword id="KW-1015">Disulfide bond</keyword>
<keyword id="KW-0313">Glucose metabolism</keyword>
<keyword id="KW-0372">Hormone</keyword>
<keyword id="KW-1185">Reference proteome</keyword>
<keyword id="KW-0964">Secreted</keyword>
<keyword id="KW-0732">Signal</keyword>
<protein>
    <recommendedName>
        <fullName>Insulin</fullName>
    </recommendedName>
    <component>
        <recommendedName>
            <fullName>Insulin B chain</fullName>
        </recommendedName>
    </component>
    <component>
        <recommendedName>
            <fullName>Insulin A chain</fullName>
        </recommendedName>
    </component>
</protein>
<dbReference type="EMBL" id="X61089">
    <property type="protein sequence ID" value="CAA43403.1"/>
    <property type="molecule type" value="Genomic_DNA"/>
</dbReference>
<dbReference type="EMBL" id="AY137497">
    <property type="protein sequence ID" value="AAN06933.1"/>
    <property type="molecule type" value="Genomic_DNA"/>
</dbReference>
<dbReference type="PIR" id="A42179">
    <property type="entry name" value="A42179"/>
</dbReference>
<dbReference type="RefSeq" id="NP_001008996.1">
    <property type="nucleotide sequence ID" value="NM_001008996.2"/>
</dbReference>
<dbReference type="PDB" id="1BZV">
    <property type="method" value="NMR"/>
    <property type="chains" value="B=25-49"/>
</dbReference>
<dbReference type="PDBsum" id="1BZV"/>
<dbReference type="BMRB" id="P30410"/>
<dbReference type="SMR" id="P30410"/>
<dbReference type="FunCoup" id="P30410">
    <property type="interactions" value="1310"/>
</dbReference>
<dbReference type="STRING" id="9598.ENSPTRP00000077843"/>
<dbReference type="PaxDb" id="9598-ENSPTRP00000005606"/>
<dbReference type="Ensembl" id="ENSPTRT00000006075.5">
    <property type="protein sequence ID" value="ENSPTRP00000005606.4"/>
    <property type="gene ID" value="ENSPTRG00000003172.6"/>
</dbReference>
<dbReference type="GeneID" id="449570"/>
<dbReference type="KEGG" id="ptr:449570"/>
<dbReference type="CTD" id="3630"/>
<dbReference type="VGNC" id="VGNC:1070">
    <property type="gene designation" value="INS"/>
</dbReference>
<dbReference type="eggNOG" id="ENOG502S5P5">
    <property type="taxonomic scope" value="Eukaryota"/>
</dbReference>
<dbReference type="GeneTree" id="ENSGT00390000015440"/>
<dbReference type="HOGENOM" id="CLU_140421_1_0_1"/>
<dbReference type="InParanoid" id="P30410"/>
<dbReference type="OMA" id="PNRAHKR"/>
<dbReference type="TreeFam" id="TF332820"/>
<dbReference type="EvolutionaryTrace" id="P30410"/>
<dbReference type="Proteomes" id="UP000002277">
    <property type="component" value="Chromosome 11"/>
</dbReference>
<dbReference type="Bgee" id="ENSPTRG00000003172">
    <property type="expression patterns" value="Expressed in liver and 3 other cell types or tissues"/>
</dbReference>
<dbReference type="GO" id="GO:0005615">
    <property type="term" value="C:extracellular space"/>
    <property type="evidence" value="ECO:0000318"/>
    <property type="project" value="GO_Central"/>
</dbReference>
<dbReference type="GO" id="GO:0005179">
    <property type="term" value="F:hormone activity"/>
    <property type="evidence" value="ECO:0007669"/>
    <property type="project" value="UniProtKB-KW"/>
</dbReference>
<dbReference type="GO" id="GO:1901701">
    <property type="term" value="P:cellular response to oxygen-containing compound"/>
    <property type="evidence" value="ECO:0007669"/>
    <property type="project" value="UniProtKB-ARBA"/>
</dbReference>
<dbReference type="GO" id="GO:0042593">
    <property type="term" value="P:glucose homeostasis"/>
    <property type="evidence" value="ECO:0000318"/>
    <property type="project" value="GO_Central"/>
</dbReference>
<dbReference type="GO" id="GO:0006006">
    <property type="term" value="P:glucose metabolic process"/>
    <property type="evidence" value="ECO:0007669"/>
    <property type="project" value="UniProtKB-KW"/>
</dbReference>
<dbReference type="GO" id="GO:0050714">
    <property type="term" value="P:positive regulation of protein secretion"/>
    <property type="evidence" value="ECO:0000318"/>
    <property type="project" value="GO_Central"/>
</dbReference>
<dbReference type="CDD" id="cd04367">
    <property type="entry name" value="IlGF_insulin_like"/>
    <property type="match status" value="1"/>
</dbReference>
<dbReference type="FunFam" id="1.10.100.10:FF:000003">
    <property type="entry name" value="Insulin"/>
    <property type="match status" value="1"/>
</dbReference>
<dbReference type="Gene3D" id="1.10.100.10">
    <property type="entry name" value="Insulin-like"/>
    <property type="match status" value="1"/>
</dbReference>
<dbReference type="InterPro" id="IPR004825">
    <property type="entry name" value="Insulin"/>
</dbReference>
<dbReference type="InterPro" id="IPR016179">
    <property type="entry name" value="Insulin-like"/>
</dbReference>
<dbReference type="InterPro" id="IPR036438">
    <property type="entry name" value="Insulin-like_sf"/>
</dbReference>
<dbReference type="InterPro" id="IPR022353">
    <property type="entry name" value="Insulin_CS"/>
</dbReference>
<dbReference type="InterPro" id="IPR022352">
    <property type="entry name" value="Insulin_family"/>
</dbReference>
<dbReference type="PANTHER" id="PTHR11454:SF9">
    <property type="entry name" value="INSULIN"/>
    <property type="match status" value="1"/>
</dbReference>
<dbReference type="PANTHER" id="PTHR11454">
    <property type="entry name" value="INSULIN/INSULIN GROWTH FACTOR"/>
    <property type="match status" value="1"/>
</dbReference>
<dbReference type="Pfam" id="PF00049">
    <property type="entry name" value="Insulin"/>
    <property type="match status" value="1"/>
</dbReference>
<dbReference type="PRINTS" id="PR00277">
    <property type="entry name" value="INSULIN"/>
</dbReference>
<dbReference type="PRINTS" id="PR00276">
    <property type="entry name" value="INSULINFAMLY"/>
</dbReference>
<dbReference type="SMART" id="SM00078">
    <property type="entry name" value="IlGF"/>
    <property type="match status" value="1"/>
</dbReference>
<dbReference type="SUPFAM" id="SSF56994">
    <property type="entry name" value="Insulin-like"/>
    <property type="match status" value="1"/>
</dbReference>
<dbReference type="PROSITE" id="PS00262">
    <property type="entry name" value="INSULIN"/>
    <property type="match status" value="1"/>
</dbReference>
<sequence length="110" mass="12025">MALWMRLLPLLVLLALWGPDPASAFVNQHLCGSHLVEALYLVCGERGFFYTPKTRREAEDLQVGQVELGGGPGAGSLQPLALEGSLQKRGIVEQCCTSICSLYQLENYCN</sequence>